<accession>A4YIX5</accession>
<reference key="1">
    <citation type="journal article" date="2008" name="Appl. Environ. Microbiol.">
        <title>The genome sequence of the metal-mobilizing, extremely thermoacidophilic archaeon Metallosphaera sedula provides insights into bioleaching-associated metabolism.</title>
        <authorList>
            <person name="Auernik K.S."/>
            <person name="Maezato Y."/>
            <person name="Blum P.H."/>
            <person name="Kelly R.M."/>
        </authorList>
    </citation>
    <scope>NUCLEOTIDE SEQUENCE [LARGE SCALE GENOMIC DNA]</scope>
    <source>
        <strain>ATCC 51363 / DSM 5348 / JCM 9185 / NBRC 15509 / TH2</strain>
    </source>
</reference>
<organism>
    <name type="scientific">Metallosphaera sedula (strain ATCC 51363 / DSM 5348 / JCM 9185 / NBRC 15509 / TH2)</name>
    <dbReference type="NCBI Taxonomy" id="399549"/>
    <lineage>
        <taxon>Archaea</taxon>
        <taxon>Thermoproteota</taxon>
        <taxon>Thermoprotei</taxon>
        <taxon>Sulfolobales</taxon>
        <taxon>Sulfolobaceae</taxon>
        <taxon>Metallosphaera</taxon>
    </lineage>
</organism>
<comment type="function">
    <text evidence="1">Catalyzes the GTP-dependent phosphorylation of the 3'-hydroxyl group of dephosphocoenzyme A to form coenzyme A (CoA).</text>
</comment>
<comment type="catalytic activity">
    <reaction evidence="1">
        <text>3'-dephospho-CoA + GTP = GDP + CoA + H(+)</text>
        <dbReference type="Rhea" id="RHEA:61156"/>
        <dbReference type="ChEBI" id="CHEBI:15378"/>
        <dbReference type="ChEBI" id="CHEBI:37565"/>
        <dbReference type="ChEBI" id="CHEBI:57287"/>
        <dbReference type="ChEBI" id="CHEBI:57328"/>
        <dbReference type="ChEBI" id="CHEBI:58189"/>
        <dbReference type="EC" id="2.7.1.237"/>
    </reaction>
</comment>
<comment type="pathway">
    <text evidence="1">Cofactor biosynthesis; coenzyme A biosynthesis.</text>
</comment>
<comment type="similarity">
    <text evidence="1">Belongs to the GTP-dependent DPCK family.</text>
</comment>
<sequence length="173" mass="19579">MEVRYKRKVDLCFRPPRTVRAELSRPYGILFSNNAKLLSYLGQFERIITVGDVVTSLVTRSGIRPFLSVVDGKTRRNVSISGERSSEVITNEAGILRFSAMSKIKEIMYGREPRSLFVNGEDDMMVIPIILYGKNGDLVVYGQPNAGAVCLENWEGSRWRVMDIFSKFTAELC</sequence>
<gene>
    <name type="ordered locus">Msed_2239</name>
</gene>
<proteinExistence type="inferred from homology"/>
<name>DPCKG_METS5</name>
<feature type="chain" id="PRO_0000380060" description="GTP-dependent dephospho-CoA kinase">
    <location>
        <begin position="1"/>
        <end position="173"/>
    </location>
</feature>
<feature type="binding site" evidence="1">
    <location>
        <position position="52"/>
    </location>
    <ligand>
        <name>GTP</name>
        <dbReference type="ChEBI" id="CHEBI:37565"/>
    </ligand>
</feature>
<feature type="binding site" evidence="1">
    <location>
        <position position="53"/>
    </location>
    <ligand>
        <name>GTP</name>
        <dbReference type="ChEBI" id="CHEBI:37565"/>
    </ligand>
</feature>
<feature type="binding site" evidence="1">
    <location>
        <position position="54"/>
    </location>
    <ligand>
        <name>GTP</name>
        <dbReference type="ChEBI" id="CHEBI:37565"/>
    </ligand>
</feature>
<feature type="binding site" evidence="1">
    <location>
        <position position="71"/>
    </location>
    <ligand>
        <name>GTP</name>
        <dbReference type="ChEBI" id="CHEBI:37565"/>
    </ligand>
</feature>
<feature type="binding site" evidence="1">
    <location>
        <position position="73"/>
    </location>
    <ligand>
        <name>GTP</name>
        <dbReference type="ChEBI" id="CHEBI:37565"/>
    </ligand>
</feature>
<feature type="binding site" evidence="1">
    <location>
        <position position="122"/>
    </location>
    <ligand>
        <name>GTP</name>
        <dbReference type="ChEBI" id="CHEBI:37565"/>
    </ligand>
</feature>
<evidence type="ECO:0000255" key="1">
    <source>
        <dbReference type="HAMAP-Rule" id="MF_00590"/>
    </source>
</evidence>
<keyword id="KW-0173">Coenzyme A biosynthesis</keyword>
<keyword id="KW-0342">GTP-binding</keyword>
<keyword id="KW-0418">Kinase</keyword>
<keyword id="KW-0547">Nucleotide-binding</keyword>
<keyword id="KW-1185">Reference proteome</keyword>
<keyword id="KW-0808">Transferase</keyword>
<dbReference type="EC" id="2.7.1.237" evidence="1"/>
<dbReference type="EMBL" id="CP000682">
    <property type="protein sequence ID" value="ABP96377.1"/>
    <property type="molecule type" value="Genomic_DNA"/>
</dbReference>
<dbReference type="RefSeq" id="WP_012022164.1">
    <property type="nucleotide sequence ID" value="NZ_CP139956.1"/>
</dbReference>
<dbReference type="SMR" id="A4YIX5"/>
<dbReference type="STRING" id="399549.Msed_2239"/>
<dbReference type="KEGG" id="mse:Msed_2239"/>
<dbReference type="eggNOG" id="arCOG04076">
    <property type="taxonomic scope" value="Archaea"/>
</dbReference>
<dbReference type="HOGENOM" id="CLU_120795_1_0_2"/>
<dbReference type="UniPathway" id="UPA00241"/>
<dbReference type="Proteomes" id="UP000000242">
    <property type="component" value="Chromosome"/>
</dbReference>
<dbReference type="GO" id="GO:0005525">
    <property type="term" value="F:GTP binding"/>
    <property type="evidence" value="ECO:0007669"/>
    <property type="project" value="UniProtKB-UniRule"/>
</dbReference>
<dbReference type="GO" id="GO:0016301">
    <property type="term" value="F:kinase activity"/>
    <property type="evidence" value="ECO:0007669"/>
    <property type="project" value="UniProtKB-UniRule"/>
</dbReference>
<dbReference type="GO" id="GO:0015937">
    <property type="term" value="P:coenzyme A biosynthetic process"/>
    <property type="evidence" value="ECO:0007669"/>
    <property type="project" value="UniProtKB-UniRule"/>
</dbReference>
<dbReference type="HAMAP" id="MF_00590">
    <property type="entry name" value="Dephospho_CoA_kinase_GTP_dep"/>
    <property type="match status" value="1"/>
</dbReference>
<dbReference type="InterPro" id="IPR007164">
    <property type="entry name" value="GTP-dep_dephospho-CoA_kin"/>
</dbReference>
<dbReference type="PANTHER" id="PTHR40732:SF1">
    <property type="entry name" value="GTP-DEPENDENT DEPHOSPHO-COA KINASE"/>
    <property type="match status" value="1"/>
</dbReference>
<dbReference type="PANTHER" id="PTHR40732">
    <property type="entry name" value="UPF0218 PROTEIN TK1697"/>
    <property type="match status" value="1"/>
</dbReference>
<dbReference type="Pfam" id="PF04019">
    <property type="entry name" value="DUF359"/>
    <property type="match status" value="1"/>
</dbReference>
<dbReference type="PIRSF" id="PIRSF006533">
    <property type="entry name" value="UCP006533"/>
    <property type="match status" value="1"/>
</dbReference>
<protein>
    <recommendedName>
        <fullName evidence="1">GTP-dependent dephospho-CoA kinase</fullName>
        <ecNumber evidence="1">2.7.1.237</ecNumber>
    </recommendedName>
    <alternativeName>
        <fullName evidence="1">Dephospho-coenzyme A kinase</fullName>
        <shortName evidence="1">DPCK</shortName>
    </alternativeName>
</protein>